<accession>O58672</accession>
<organism>
    <name type="scientific">Pyrococcus horikoshii (strain ATCC 700860 / DSM 12428 / JCM 9974 / NBRC 100139 / OT-3)</name>
    <dbReference type="NCBI Taxonomy" id="70601"/>
    <lineage>
        <taxon>Archaea</taxon>
        <taxon>Methanobacteriati</taxon>
        <taxon>Methanobacteriota</taxon>
        <taxon>Thermococci</taxon>
        <taxon>Thermococcales</taxon>
        <taxon>Thermococcaceae</taxon>
        <taxon>Pyrococcus</taxon>
    </lineage>
</organism>
<evidence type="ECO:0000305" key="1"/>
<comment type="similarity">
    <text evidence="1">Belongs to the UPF0091 family.</text>
</comment>
<feature type="chain" id="PRO_0000184967" description="UPF0091 protein PH0944">
    <location>
        <begin position="1"/>
        <end position="103"/>
    </location>
</feature>
<dbReference type="EMBL" id="BA000001">
    <property type="protein sequence ID" value="BAA30041.1"/>
    <property type="molecule type" value="Genomic_DNA"/>
</dbReference>
<dbReference type="PIR" id="C71085">
    <property type="entry name" value="C71085"/>
</dbReference>
<dbReference type="RefSeq" id="WP_010885036.1">
    <property type="nucleotide sequence ID" value="NC_000961.1"/>
</dbReference>
<dbReference type="SMR" id="O58672"/>
<dbReference type="STRING" id="70601.gene:9377899"/>
<dbReference type="EnsemblBacteria" id="BAA30041">
    <property type="protein sequence ID" value="BAA30041"/>
    <property type="gene ID" value="BAA30041"/>
</dbReference>
<dbReference type="GeneID" id="1443271"/>
<dbReference type="KEGG" id="pho:PH0944"/>
<dbReference type="eggNOG" id="arCOG03083">
    <property type="taxonomic scope" value="Archaea"/>
</dbReference>
<dbReference type="OrthoDB" id="19138at2157"/>
<dbReference type="Proteomes" id="UP000000752">
    <property type="component" value="Chromosome"/>
</dbReference>
<dbReference type="GO" id="GO:0015385">
    <property type="term" value="F:sodium:proton antiporter activity"/>
    <property type="evidence" value="ECO:0007669"/>
    <property type="project" value="TreeGrafter"/>
</dbReference>
<dbReference type="InterPro" id="IPR005133">
    <property type="entry name" value="PhaG_MnhG_YufB"/>
</dbReference>
<dbReference type="NCBIfam" id="TIGR01300">
    <property type="entry name" value="CPA3_mnhG_phaG"/>
    <property type="match status" value="1"/>
</dbReference>
<dbReference type="NCBIfam" id="NF009320">
    <property type="entry name" value="PRK12675.1"/>
    <property type="match status" value="1"/>
</dbReference>
<dbReference type="PANTHER" id="PTHR34703">
    <property type="entry name" value="ANTIPORTER SUBUNIT MNHG2-RELATED"/>
    <property type="match status" value="1"/>
</dbReference>
<dbReference type="PANTHER" id="PTHR34703:SF1">
    <property type="entry name" value="ANTIPORTER SUBUNIT MNHG2-RELATED"/>
    <property type="match status" value="1"/>
</dbReference>
<dbReference type="Pfam" id="PF03334">
    <property type="entry name" value="PhaG_MnhG_YufB"/>
    <property type="match status" value="1"/>
</dbReference>
<gene>
    <name type="ordered locus">PH0944</name>
</gene>
<protein>
    <recommendedName>
        <fullName>UPF0091 protein PH0944</fullName>
    </recommendedName>
</protein>
<name>Y944_PYRHO</name>
<reference key="1">
    <citation type="journal article" date="1998" name="DNA Res.">
        <title>Complete sequence and gene organization of the genome of a hyper-thermophilic archaebacterium, Pyrococcus horikoshii OT3.</title>
        <authorList>
            <person name="Kawarabayasi Y."/>
            <person name="Sawada M."/>
            <person name="Horikawa H."/>
            <person name="Haikawa Y."/>
            <person name="Hino Y."/>
            <person name="Yamamoto S."/>
            <person name="Sekine M."/>
            <person name="Baba S."/>
            <person name="Kosugi H."/>
            <person name="Hosoyama A."/>
            <person name="Nagai Y."/>
            <person name="Sakai M."/>
            <person name="Ogura K."/>
            <person name="Otsuka R."/>
            <person name="Nakazawa H."/>
            <person name="Takamiya M."/>
            <person name="Ohfuku Y."/>
            <person name="Funahashi T."/>
            <person name="Tanaka T."/>
            <person name="Kudoh Y."/>
            <person name="Yamazaki J."/>
            <person name="Kushida N."/>
            <person name="Oguchi A."/>
            <person name="Aoki K."/>
            <person name="Yoshizawa T."/>
            <person name="Nakamura Y."/>
            <person name="Robb F.T."/>
            <person name="Horikoshi K."/>
            <person name="Masuchi Y."/>
            <person name="Shizuya H."/>
            <person name="Kikuchi H."/>
        </authorList>
    </citation>
    <scope>NUCLEOTIDE SEQUENCE [LARGE SCALE GENOMIC DNA]</scope>
    <source>
        <strain>ATCC 700860 / DSM 12428 / JCM 9974 / NBRC 100139 / OT-3</strain>
    </source>
</reference>
<sequence length="103" mass="11384">MLELLPLLFGYLIMFFGALGVVRFPDVYTRLHAATKCDTGGIMGIILGLSMIVNSWAIRTKLVILLIFIAMINPMISHAIARGAYKGGVKPKVKVDMYAWDNP</sequence>
<proteinExistence type="inferred from homology"/>